<accession>Q7RZF5</accession>
<sequence>MTAGAQVIANSGHDDMIHDAVLDYYGRRLATCSSDRTIKIFEIEGESQRLVETLKGHDGAVWSVAWAHPKYGNILASAGYDGKVLIWREQAGSWQRIFDFALHKASVNIVSWSPHEAGCLLACASSDGNVSVLEFKDNSWEHNIFHAHGLGVNSVSWAPATTPGSIVSSNPGPGSTGNRRFVTGGSDNLLKIWTFDPATNGYKLEREPLAGHTDWVRDVAWSPTVLQKSYIASASQDKTVRIWTSDAANPGEWKCKVLNFDAAVWRVSWSLSGNVLAASSDNNKVTLWKENLKGEWENVKTIEE</sequence>
<feature type="chain" id="PRO_0000295419" description="Protein transport protein sec13">
    <location>
        <begin position="1"/>
        <end position="304"/>
    </location>
</feature>
<feature type="repeat" description="WD 1">
    <location>
        <begin position="12"/>
        <end position="51"/>
    </location>
</feature>
<feature type="repeat" description="WD 2">
    <location>
        <begin position="56"/>
        <end position="97"/>
    </location>
</feature>
<feature type="repeat" description="WD 3">
    <location>
        <begin position="102"/>
        <end position="143"/>
    </location>
</feature>
<feature type="repeat" description="WD 4">
    <location>
        <begin position="147"/>
        <end position="203"/>
    </location>
</feature>
<feature type="repeat" description="WD 5">
    <location>
        <begin position="211"/>
        <end position="253"/>
    </location>
</feature>
<feature type="repeat" description="WD 6">
    <location>
        <begin position="259"/>
        <end position="298"/>
    </location>
</feature>
<name>SEC13_NEUCR</name>
<dbReference type="EMBL" id="CM002241">
    <property type="protein sequence ID" value="EAA28442.2"/>
    <property type="molecule type" value="Genomic_DNA"/>
</dbReference>
<dbReference type="RefSeq" id="XP_957678.2">
    <property type="nucleotide sequence ID" value="XM_952585.3"/>
</dbReference>
<dbReference type="SMR" id="Q7RZF5"/>
<dbReference type="FunCoup" id="Q7RZF5">
    <property type="interactions" value="1040"/>
</dbReference>
<dbReference type="STRING" id="367110.Q7RZF5"/>
<dbReference type="PaxDb" id="5141-EFNCRP00000003685"/>
<dbReference type="EnsemblFungi" id="EAA28442">
    <property type="protein sequence ID" value="EAA28442"/>
    <property type="gene ID" value="NCU04063"/>
</dbReference>
<dbReference type="GeneID" id="3873801"/>
<dbReference type="KEGG" id="ncr:NCU04063"/>
<dbReference type="VEuPathDB" id="FungiDB:NCU04063"/>
<dbReference type="HOGENOM" id="CLU_032441_0_1_1"/>
<dbReference type="InParanoid" id="Q7RZF5"/>
<dbReference type="OMA" id="IWKEEGD"/>
<dbReference type="OrthoDB" id="364224at2759"/>
<dbReference type="Proteomes" id="UP000001805">
    <property type="component" value="Chromosome 5, Linkage Group VI"/>
</dbReference>
<dbReference type="GO" id="GO:0030127">
    <property type="term" value="C:COPII vesicle coat"/>
    <property type="evidence" value="ECO:0000318"/>
    <property type="project" value="GO_Central"/>
</dbReference>
<dbReference type="GO" id="GO:0005789">
    <property type="term" value="C:endoplasmic reticulum membrane"/>
    <property type="evidence" value="ECO:0007669"/>
    <property type="project" value="UniProtKB-SubCell"/>
</dbReference>
<dbReference type="GO" id="GO:0061700">
    <property type="term" value="C:GATOR2 complex"/>
    <property type="evidence" value="ECO:0007669"/>
    <property type="project" value="EnsemblFungi"/>
</dbReference>
<dbReference type="GO" id="GO:0031080">
    <property type="term" value="C:nuclear pore outer ring"/>
    <property type="evidence" value="ECO:0000318"/>
    <property type="project" value="GO_Central"/>
</dbReference>
<dbReference type="GO" id="GO:0005198">
    <property type="term" value="F:structural molecule activity"/>
    <property type="evidence" value="ECO:0000318"/>
    <property type="project" value="GO_Central"/>
</dbReference>
<dbReference type="GO" id="GO:0090114">
    <property type="term" value="P:COPII-coated vesicle budding"/>
    <property type="evidence" value="ECO:0000318"/>
    <property type="project" value="GO_Central"/>
</dbReference>
<dbReference type="GO" id="GO:0036503">
    <property type="term" value="P:ERAD pathway"/>
    <property type="evidence" value="ECO:0007669"/>
    <property type="project" value="EnsemblFungi"/>
</dbReference>
<dbReference type="GO" id="GO:0051028">
    <property type="term" value="P:mRNA transport"/>
    <property type="evidence" value="ECO:0007669"/>
    <property type="project" value="UniProtKB-KW"/>
</dbReference>
<dbReference type="GO" id="GO:0051664">
    <property type="term" value="P:nuclear pore localization"/>
    <property type="evidence" value="ECO:0007669"/>
    <property type="project" value="EnsemblFungi"/>
</dbReference>
<dbReference type="GO" id="GO:0045893">
    <property type="term" value="P:positive regulation of DNA-templated transcription"/>
    <property type="evidence" value="ECO:0007669"/>
    <property type="project" value="EnsemblFungi"/>
</dbReference>
<dbReference type="GO" id="GO:1902953">
    <property type="term" value="P:positive regulation of ER to Golgi vesicle-mediated transport"/>
    <property type="evidence" value="ECO:0007669"/>
    <property type="project" value="EnsemblFungi"/>
</dbReference>
<dbReference type="GO" id="GO:0070863">
    <property type="term" value="P:positive regulation of protein exit from endoplasmic reticulum"/>
    <property type="evidence" value="ECO:0007669"/>
    <property type="project" value="EnsemblFungi"/>
</dbReference>
<dbReference type="GO" id="GO:0032008">
    <property type="term" value="P:positive regulation of TOR signaling"/>
    <property type="evidence" value="ECO:0000318"/>
    <property type="project" value="GO_Central"/>
</dbReference>
<dbReference type="GO" id="GO:1904263">
    <property type="term" value="P:positive regulation of TORC1 signaling"/>
    <property type="evidence" value="ECO:0007669"/>
    <property type="project" value="EnsemblFungi"/>
</dbReference>
<dbReference type="GO" id="GO:0032527">
    <property type="term" value="P:protein exit from endoplasmic reticulum"/>
    <property type="evidence" value="ECO:0000318"/>
    <property type="project" value="GO_Central"/>
</dbReference>
<dbReference type="GO" id="GO:0006606">
    <property type="term" value="P:protein import into nucleus"/>
    <property type="evidence" value="ECO:0000318"/>
    <property type="project" value="GO_Central"/>
</dbReference>
<dbReference type="FunFam" id="2.130.10.10:FF:000017">
    <property type="entry name" value="SEC13 homolog (S. cerevisiae)"/>
    <property type="match status" value="1"/>
</dbReference>
<dbReference type="Gene3D" id="2.130.10.10">
    <property type="entry name" value="YVTN repeat-like/Quinoprotein amine dehydrogenase"/>
    <property type="match status" value="1"/>
</dbReference>
<dbReference type="InterPro" id="IPR037363">
    <property type="entry name" value="Sec13/Seh1_fam"/>
</dbReference>
<dbReference type="InterPro" id="IPR015943">
    <property type="entry name" value="WD40/YVTN_repeat-like_dom_sf"/>
</dbReference>
<dbReference type="InterPro" id="IPR036322">
    <property type="entry name" value="WD40_repeat_dom_sf"/>
</dbReference>
<dbReference type="InterPro" id="IPR001680">
    <property type="entry name" value="WD40_rpt"/>
</dbReference>
<dbReference type="PANTHER" id="PTHR11024">
    <property type="entry name" value="NUCLEAR PORE COMPLEX PROTEIN SEC13 / SEH1 FAMILY MEMBER"/>
    <property type="match status" value="1"/>
</dbReference>
<dbReference type="PANTHER" id="PTHR11024:SF2">
    <property type="entry name" value="PROTEIN SEC13 HOMOLOG"/>
    <property type="match status" value="1"/>
</dbReference>
<dbReference type="Pfam" id="PF00400">
    <property type="entry name" value="WD40"/>
    <property type="match status" value="4"/>
</dbReference>
<dbReference type="SMART" id="SM00320">
    <property type="entry name" value="WD40"/>
    <property type="match status" value="6"/>
</dbReference>
<dbReference type="SUPFAM" id="SSF50978">
    <property type="entry name" value="WD40 repeat-like"/>
    <property type="match status" value="1"/>
</dbReference>
<dbReference type="PROSITE" id="PS50082">
    <property type="entry name" value="WD_REPEATS_2"/>
    <property type="match status" value="2"/>
</dbReference>
<dbReference type="PROSITE" id="PS50294">
    <property type="entry name" value="WD_REPEATS_REGION"/>
    <property type="match status" value="1"/>
</dbReference>
<gene>
    <name type="primary">nup-20</name>
    <name type="synonym">sec13</name>
    <name type="ORF">NCU04063</name>
</gene>
<proteinExistence type="inferred from homology"/>
<reference key="1">
    <citation type="journal article" date="2003" name="Nature">
        <title>The genome sequence of the filamentous fungus Neurospora crassa.</title>
        <authorList>
            <person name="Galagan J.E."/>
            <person name="Calvo S.E."/>
            <person name="Borkovich K.A."/>
            <person name="Selker E.U."/>
            <person name="Read N.D."/>
            <person name="Jaffe D.B."/>
            <person name="FitzHugh W."/>
            <person name="Ma L.-J."/>
            <person name="Smirnov S."/>
            <person name="Purcell S."/>
            <person name="Rehman B."/>
            <person name="Elkins T."/>
            <person name="Engels R."/>
            <person name="Wang S."/>
            <person name="Nielsen C.B."/>
            <person name="Butler J."/>
            <person name="Endrizzi M."/>
            <person name="Qui D."/>
            <person name="Ianakiev P."/>
            <person name="Bell-Pedersen D."/>
            <person name="Nelson M.A."/>
            <person name="Werner-Washburne M."/>
            <person name="Selitrennikoff C.P."/>
            <person name="Kinsey J.A."/>
            <person name="Braun E.L."/>
            <person name="Zelter A."/>
            <person name="Schulte U."/>
            <person name="Kothe G.O."/>
            <person name="Jedd G."/>
            <person name="Mewes H.-W."/>
            <person name="Staben C."/>
            <person name="Marcotte E."/>
            <person name="Greenberg D."/>
            <person name="Roy A."/>
            <person name="Foley K."/>
            <person name="Naylor J."/>
            <person name="Stange-Thomann N."/>
            <person name="Barrett R."/>
            <person name="Gnerre S."/>
            <person name="Kamal M."/>
            <person name="Kamvysselis M."/>
            <person name="Mauceli E.W."/>
            <person name="Bielke C."/>
            <person name="Rudd S."/>
            <person name="Frishman D."/>
            <person name="Krystofova S."/>
            <person name="Rasmussen C."/>
            <person name="Metzenberg R.L."/>
            <person name="Perkins D.D."/>
            <person name="Kroken S."/>
            <person name="Cogoni C."/>
            <person name="Macino G."/>
            <person name="Catcheside D.E.A."/>
            <person name="Li W."/>
            <person name="Pratt R.J."/>
            <person name="Osmani S.A."/>
            <person name="DeSouza C.P.C."/>
            <person name="Glass N.L."/>
            <person name="Orbach M.J."/>
            <person name="Berglund J.A."/>
            <person name="Voelker R."/>
            <person name="Yarden O."/>
            <person name="Plamann M."/>
            <person name="Seiler S."/>
            <person name="Dunlap J.C."/>
            <person name="Radford A."/>
            <person name="Aramayo R."/>
            <person name="Natvig D.O."/>
            <person name="Alex L.A."/>
            <person name="Mannhaupt G."/>
            <person name="Ebbole D.J."/>
            <person name="Freitag M."/>
            <person name="Paulsen I."/>
            <person name="Sachs M.S."/>
            <person name="Lander E.S."/>
            <person name="Nusbaum C."/>
            <person name="Birren B.W."/>
        </authorList>
    </citation>
    <scope>NUCLEOTIDE SEQUENCE [LARGE SCALE GENOMIC DNA]</scope>
    <source>
        <strain>ATCC 24698 / 74-OR23-1A / CBS 708.71 / DSM 1257 / FGSC 987</strain>
    </source>
</reference>
<keyword id="KW-0968">Cytoplasmic vesicle</keyword>
<keyword id="KW-0256">Endoplasmic reticulum</keyword>
<keyword id="KW-0931">ER-Golgi transport</keyword>
<keyword id="KW-0472">Membrane</keyword>
<keyword id="KW-0509">mRNA transport</keyword>
<keyword id="KW-0906">Nuclear pore complex</keyword>
<keyword id="KW-0539">Nucleus</keyword>
<keyword id="KW-0653">Protein transport</keyword>
<keyword id="KW-1185">Reference proteome</keyword>
<keyword id="KW-0677">Repeat</keyword>
<keyword id="KW-0811">Translocation</keyword>
<keyword id="KW-0813">Transport</keyword>
<keyword id="KW-0853">WD repeat</keyword>
<evidence type="ECO:0000250" key="1"/>
<evidence type="ECO:0000250" key="2">
    <source>
        <dbReference type="UniProtKB" id="Q04491"/>
    </source>
</evidence>
<evidence type="ECO:0000305" key="3"/>
<protein>
    <recommendedName>
        <fullName>Protein transport protein sec13</fullName>
    </recommendedName>
    <alternativeName>
        <fullName>Nucleoporin 20</fullName>
    </alternativeName>
</protein>
<comment type="function">
    <text evidence="2">Component of the coat protein complex II (COPII) which promotes the formation of transport vesicles from the endoplasmic reticulum (ER). The coat has two main functions, the physical deformation of the endoplasmic reticulum membrane into vesicles and the selection of cargo molecules. It also functions as a component of the nuclear pore complex (NPC). NPC components, collectively referred to as nucleoporins (NUPs), can play the role of both NPC structural components and of docking or interaction partners for transiently associated nuclear transport factors. Nup-20/sec13 is required for efficient mRNA export from the nucleus to the cytoplasm and for correct nuclear pore biogenesis and distribution (By similarity).</text>
</comment>
<comment type="subunit">
    <text evidence="2">The COPII coat is composed of at least 5 proteins: the sec23/24 complex, the sec13/31 complex, and the protein vtr-7/sar1. Component of the nuclear pore complex (NPC). NPC constitutes the exclusive means of nucleocytoplasmic transport. NPCs allow the passive diffusion of ions and small molecules and the active, nuclear transport receptor-mediated bidirectional transport of macromolecules such as proteins, RNAs, ribonucleoparticles (RNPs), and ribosomal subunits across the nuclear envelope. Due to its 8-fold rotational symmetry, all subunits are present with 8 copies or multiples thereof.</text>
</comment>
<comment type="subcellular location">
    <subcellularLocation>
        <location evidence="1">Cytoplasmic vesicle</location>
        <location evidence="1">COPII-coated vesicle membrane</location>
        <topology evidence="1">Peripheral membrane protein</topology>
        <orientation evidence="1">Cytoplasmic side</orientation>
    </subcellularLocation>
    <subcellularLocation>
        <location evidence="1">Endoplasmic reticulum membrane</location>
        <topology evidence="1">Peripheral membrane protein</topology>
        <orientation evidence="1">Cytoplasmic side</orientation>
    </subcellularLocation>
    <subcellularLocation>
        <location evidence="1">Nucleus</location>
        <location evidence="1">Nuclear pore complex</location>
    </subcellularLocation>
</comment>
<comment type="similarity">
    <text evidence="3">Belongs to the WD repeat SEC13 family.</text>
</comment>
<organism>
    <name type="scientific">Neurospora crassa (strain ATCC 24698 / 74-OR23-1A / CBS 708.71 / DSM 1257 / FGSC 987)</name>
    <dbReference type="NCBI Taxonomy" id="367110"/>
    <lineage>
        <taxon>Eukaryota</taxon>
        <taxon>Fungi</taxon>
        <taxon>Dikarya</taxon>
        <taxon>Ascomycota</taxon>
        <taxon>Pezizomycotina</taxon>
        <taxon>Sordariomycetes</taxon>
        <taxon>Sordariomycetidae</taxon>
        <taxon>Sordariales</taxon>
        <taxon>Sordariaceae</taxon>
        <taxon>Neurospora</taxon>
    </lineage>
</organism>